<proteinExistence type="inferred from homology"/>
<sequence length="316" mass="36360">MSIKEQTLMTPYLQFDRNQWAALRDSVPMTLSEDEIARLKGINEDLSLEEVAEIYLPLSRLLNFYISSNLRRQAVLEQFLGTNGQRIPYIISIAGSVAVGKSTTARVLQALLSRWPEHRRVELITTDGFLHPNQVLKERGLMKKKGFPESYDMHRLVKFVSDLKSGVPNVTAPVYSHLIYDVIPDGDKTVVQPDILILEGLNVLQSGMDYPHDPHHVFVSDFVDFSIYVDAPEDLLQTWYINRFLKFREGAFTDPDSYFHNYAKLTKEEAIKTAMTLWKEINWLNLKQNILPTRERASLILTKSANHAVEEVRLRK</sequence>
<gene>
    <name evidence="1" type="primary">coaA</name>
    <name type="ordered locus">EFER_3777</name>
</gene>
<reference key="1">
    <citation type="journal article" date="2009" name="PLoS Genet.">
        <title>Organised genome dynamics in the Escherichia coli species results in highly diverse adaptive paths.</title>
        <authorList>
            <person name="Touchon M."/>
            <person name="Hoede C."/>
            <person name="Tenaillon O."/>
            <person name="Barbe V."/>
            <person name="Baeriswyl S."/>
            <person name="Bidet P."/>
            <person name="Bingen E."/>
            <person name="Bonacorsi S."/>
            <person name="Bouchier C."/>
            <person name="Bouvet O."/>
            <person name="Calteau A."/>
            <person name="Chiapello H."/>
            <person name="Clermont O."/>
            <person name="Cruveiller S."/>
            <person name="Danchin A."/>
            <person name="Diard M."/>
            <person name="Dossat C."/>
            <person name="Karoui M.E."/>
            <person name="Frapy E."/>
            <person name="Garry L."/>
            <person name="Ghigo J.M."/>
            <person name="Gilles A.M."/>
            <person name="Johnson J."/>
            <person name="Le Bouguenec C."/>
            <person name="Lescat M."/>
            <person name="Mangenot S."/>
            <person name="Martinez-Jehanne V."/>
            <person name="Matic I."/>
            <person name="Nassif X."/>
            <person name="Oztas S."/>
            <person name="Petit M.A."/>
            <person name="Pichon C."/>
            <person name="Rouy Z."/>
            <person name="Ruf C.S."/>
            <person name="Schneider D."/>
            <person name="Tourret J."/>
            <person name="Vacherie B."/>
            <person name="Vallenet D."/>
            <person name="Medigue C."/>
            <person name="Rocha E.P.C."/>
            <person name="Denamur E."/>
        </authorList>
    </citation>
    <scope>NUCLEOTIDE SEQUENCE [LARGE SCALE GENOMIC DNA]</scope>
    <source>
        <strain>ATCC 35469 / DSM 13698 / BCRC 15582 / CCUG 18766 / IAM 14443 / JCM 21226 / LMG 7866 / NBRC 102419 / NCTC 12128 / CDC 0568-73</strain>
    </source>
</reference>
<dbReference type="EC" id="2.7.1.33" evidence="1"/>
<dbReference type="EMBL" id="CU928158">
    <property type="protein sequence ID" value="CAQ91226.1"/>
    <property type="molecule type" value="Genomic_DNA"/>
</dbReference>
<dbReference type="RefSeq" id="WP_000023081.1">
    <property type="nucleotide sequence ID" value="NC_011740.1"/>
</dbReference>
<dbReference type="SMR" id="B7LUM3"/>
<dbReference type="GeneID" id="93777919"/>
<dbReference type="KEGG" id="efe:EFER_3777"/>
<dbReference type="HOGENOM" id="CLU_053818_1_1_6"/>
<dbReference type="OrthoDB" id="1550976at2"/>
<dbReference type="UniPathway" id="UPA00241">
    <property type="reaction ID" value="UER00352"/>
</dbReference>
<dbReference type="Proteomes" id="UP000000745">
    <property type="component" value="Chromosome"/>
</dbReference>
<dbReference type="GO" id="GO:0005737">
    <property type="term" value="C:cytoplasm"/>
    <property type="evidence" value="ECO:0007669"/>
    <property type="project" value="UniProtKB-SubCell"/>
</dbReference>
<dbReference type="GO" id="GO:0005524">
    <property type="term" value="F:ATP binding"/>
    <property type="evidence" value="ECO:0007669"/>
    <property type="project" value="UniProtKB-UniRule"/>
</dbReference>
<dbReference type="GO" id="GO:0004594">
    <property type="term" value="F:pantothenate kinase activity"/>
    <property type="evidence" value="ECO:0007669"/>
    <property type="project" value="UniProtKB-UniRule"/>
</dbReference>
<dbReference type="GO" id="GO:0015937">
    <property type="term" value="P:coenzyme A biosynthetic process"/>
    <property type="evidence" value="ECO:0007669"/>
    <property type="project" value="UniProtKB-UniRule"/>
</dbReference>
<dbReference type="CDD" id="cd02025">
    <property type="entry name" value="PanK"/>
    <property type="match status" value="1"/>
</dbReference>
<dbReference type="FunFam" id="3.40.50.300:FF:000242">
    <property type="entry name" value="Pantothenate kinase"/>
    <property type="match status" value="1"/>
</dbReference>
<dbReference type="Gene3D" id="3.40.50.300">
    <property type="entry name" value="P-loop containing nucleotide triphosphate hydrolases"/>
    <property type="match status" value="1"/>
</dbReference>
<dbReference type="HAMAP" id="MF_00215">
    <property type="entry name" value="Pantothen_kinase_1"/>
    <property type="match status" value="1"/>
</dbReference>
<dbReference type="InterPro" id="IPR027417">
    <property type="entry name" value="P-loop_NTPase"/>
</dbReference>
<dbReference type="InterPro" id="IPR004566">
    <property type="entry name" value="PanK"/>
</dbReference>
<dbReference type="InterPro" id="IPR006083">
    <property type="entry name" value="PRK/URK"/>
</dbReference>
<dbReference type="NCBIfam" id="TIGR00554">
    <property type="entry name" value="panK_bact"/>
    <property type="match status" value="1"/>
</dbReference>
<dbReference type="PANTHER" id="PTHR10285">
    <property type="entry name" value="URIDINE KINASE"/>
    <property type="match status" value="1"/>
</dbReference>
<dbReference type="Pfam" id="PF00485">
    <property type="entry name" value="PRK"/>
    <property type="match status" value="1"/>
</dbReference>
<dbReference type="PIRSF" id="PIRSF000545">
    <property type="entry name" value="Pantothenate_kin"/>
    <property type="match status" value="1"/>
</dbReference>
<dbReference type="SUPFAM" id="SSF52540">
    <property type="entry name" value="P-loop containing nucleoside triphosphate hydrolases"/>
    <property type="match status" value="1"/>
</dbReference>
<evidence type="ECO:0000255" key="1">
    <source>
        <dbReference type="HAMAP-Rule" id="MF_00215"/>
    </source>
</evidence>
<keyword id="KW-0067">ATP-binding</keyword>
<keyword id="KW-0173">Coenzyme A biosynthesis</keyword>
<keyword id="KW-0963">Cytoplasm</keyword>
<keyword id="KW-0418">Kinase</keyword>
<keyword id="KW-0547">Nucleotide-binding</keyword>
<keyword id="KW-0808">Transferase</keyword>
<accession>B7LUM3</accession>
<protein>
    <recommendedName>
        <fullName evidence="1">Pantothenate kinase</fullName>
        <ecNumber evidence="1">2.7.1.33</ecNumber>
    </recommendedName>
    <alternativeName>
        <fullName evidence="1">Pantothenic acid kinase</fullName>
    </alternativeName>
</protein>
<comment type="catalytic activity">
    <reaction evidence="1">
        <text>(R)-pantothenate + ATP = (R)-4'-phosphopantothenate + ADP + H(+)</text>
        <dbReference type="Rhea" id="RHEA:16373"/>
        <dbReference type="ChEBI" id="CHEBI:10986"/>
        <dbReference type="ChEBI" id="CHEBI:15378"/>
        <dbReference type="ChEBI" id="CHEBI:29032"/>
        <dbReference type="ChEBI" id="CHEBI:30616"/>
        <dbReference type="ChEBI" id="CHEBI:456216"/>
        <dbReference type="EC" id="2.7.1.33"/>
    </reaction>
</comment>
<comment type="pathway">
    <text evidence="1">Cofactor biosynthesis; coenzyme A biosynthesis; CoA from (R)-pantothenate: step 1/5.</text>
</comment>
<comment type="subcellular location">
    <subcellularLocation>
        <location evidence="1">Cytoplasm</location>
    </subcellularLocation>
</comment>
<comment type="similarity">
    <text evidence="1">Belongs to the prokaryotic pantothenate kinase family.</text>
</comment>
<organism>
    <name type="scientific">Escherichia fergusonii (strain ATCC 35469 / DSM 13698 / CCUG 18766 / IAM 14443 / JCM 21226 / LMG 7866 / NBRC 102419 / NCTC 12128 / CDC 0568-73)</name>
    <dbReference type="NCBI Taxonomy" id="585054"/>
    <lineage>
        <taxon>Bacteria</taxon>
        <taxon>Pseudomonadati</taxon>
        <taxon>Pseudomonadota</taxon>
        <taxon>Gammaproteobacteria</taxon>
        <taxon>Enterobacterales</taxon>
        <taxon>Enterobacteriaceae</taxon>
        <taxon>Escherichia</taxon>
    </lineage>
</organism>
<name>COAA_ESCF3</name>
<feature type="chain" id="PRO_1000189615" description="Pantothenate kinase">
    <location>
        <begin position="1"/>
        <end position="316"/>
    </location>
</feature>
<feature type="binding site" evidence="1">
    <location>
        <begin position="95"/>
        <end position="102"/>
    </location>
    <ligand>
        <name>ATP</name>
        <dbReference type="ChEBI" id="CHEBI:30616"/>
    </ligand>
</feature>